<dbReference type="EMBL" id="AB065534">
    <property type="protein sequence ID" value="BAC05780.1"/>
    <property type="status" value="ALT_INIT"/>
    <property type="molecule type" value="Genomic_DNA"/>
</dbReference>
<dbReference type="RefSeq" id="NP_001382845.2">
    <property type="nucleotide sequence ID" value="NM_001395916.2"/>
</dbReference>
<dbReference type="SMR" id="Q8NH57"/>
<dbReference type="FunCoup" id="Q8NH57">
    <property type="interactions" value="817"/>
</dbReference>
<dbReference type="GlyCosmos" id="Q8NH57">
    <property type="glycosylation" value="1 site, No reported glycans"/>
</dbReference>
<dbReference type="GlyGen" id="Q8NH57">
    <property type="glycosylation" value="1 site"/>
</dbReference>
<dbReference type="BioMuta" id="HGNC:15232"/>
<dbReference type="DMDM" id="38372815"/>
<dbReference type="MassIVE" id="Q8NH57"/>
<dbReference type="PeptideAtlas" id="Q8NH57"/>
<dbReference type="GeneID" id="81248"/>
<dbReference type="AGR" id="HGNC:15232"/>
<dbReference type="GeneCards" id="OR52P1"/>
<dbReference type="HGNC" id="HGNC:15232">
    <property type="gene designation" value="OR52P1"/>
</dbReference>
<dbReference type="neXtProt" id="NX_Q8NH57"/>
<dbReference type="InParanoid" id="Q8NH57"/>
<dbReference type="PAN-GO" id="Q8NH57">
    <property type="GO annotations" value="0 GO annotations based on evolutionary models"/>
</dbReference>
<dbReference type="PhylomeDB" id="Q8NH57"/>
<dbReference type="PathwayCommons" id="Q8NH57"/>
<dbReference type="Pharos" id="Q8NH57">
    <property type="development level" value="Tdark"/>
</dbReference>
<dbReference type="PRO" id="PR:Q8NH57"/>
<dbReference type="Proteomes" id="UP000005640">
    <property type="component" value="Unplaced"/>
</dbReference>
<dbReference type="RNAct" id="Q8NH57">
    <property type="molecule type" value="protein"/>
</dbReference>
<dbReference type="GO" id="GO:0005886">
    <property type="term" value="C:plasma membrane"/>
    <property type="evidence" value="ECO:0000318"/>
    <property type="project" value="GO_Central"/>
</dbReference>
<dbReference type="GO" id="GO:0004930">
    <property type="term" value="F:G protein-coupled receptor activity"/>
    <property type="evidence" value="ECO:0007669"/>
    <property type="project" value="UniProtKB-KW"/>
</dbReference>
<dbReference type="GO" id="GO:0004984">
    <property type="term" value="F:olfactory receptor activity"/>
    <property type="evidence" value="ECO:0000318"/>
    <property type="project" value="GO_Central"/>
</dbReference>
<dbReference type="CDD" id="cd15953">
    <property type="entry name" value="7tmA_OR52P-like"/>
    <property type="match status" value="1"/>
</dbReference>
<dbReference type="FunFam" id="1.20.1070.10:FF:000006">
    <property type="entry name" value="Olfactory receptor"/>
    <property type="match status" value="1"/>
</dbReference>
<dbReference type="Gene3D" id="1.20.1070.10">
    <property type="entry name" value="Rhodopsin 7-helix transmembrane proteins"/>
    <property type="match status" value="1"/>
</dbReference>
<dbReference type="InterPro" id="IPR000276">
    <property type="entry name" value="GPCR_Rhodpsn"/>
</dbReference>
<dbReference type="InterPro" id="IPR017452">
    <property type="entry name" value="GPCR_Rhodpsn_7TM"/>
</dbReference>
<dbReference type="InterPro" id="IPR000725">
    <property type="entry name" value="Olfact_rcpt"/>
</dbReference>
<dbReference type="InterPro" id="IPR050402">
    <property type="entry name" value="OR51/52/56-like"/>
</dbReference>
<dbReference type="PANTHER" id="PTHR26450:SF83">
    <property type="entry name" value="OLFACTORY RECEPTOR 52P1"/>
    <property type="match status" value="1"/>
</dbReference>
<dbReference type="PANTHER" id="PTHR26450">
    <property type="entry name" value="OLFACTORY RECEPTOR 56B1-RELATED"/>
    <property type="match status" value="1"/>
</dbReference>
<dbReference type="Pfam" id="PF13853">
    <property type="entry name" value="7tm_4"/>
    <property type="match status" value="1"/>
</dbReference>
<dbReference type="PRINTS" id="PR00237">
    <property type="entry name" value="GPCRRHODOPSN"/>
</dbReference>
<dbReference type="PRINTS" id="PR00245">
    <property type="entry name" value="OLFACTORYR"/>
</dbReference>
<dbReference type="SUPFAM" id="SSF81321">
    <property type="entry name" value="Family A G protein-coupled receptor-like"/>
    <property type="match status" value="1"/>
</dbReference>
<dbReference type="PROSITE" id="PS00237">
    <property type="entry name" value="G_PROTEIN_RECEP_F1_1"/>
    <property type="match status" value="1"/>
</dbReference>
<dbReference type="PROSITE" id="PS50262">
    <property type="entry name" value="G_PROTEIN_RECEP_F1_2"/>
    <property type="match status" value="1"/>
</dbReference>
<feature type="chain" id="PRO_0000150790" description="Olfactory receptor 52P1">
    <location>
        <begin position="1"/>
        <end position="321"/>
    </location>
</feature>
<feature type="topological domain" description="Extracellular" evidence="1">
    <location>
        <begin position="1"/>
        <end position="27"/>
    </location>
</feature>
<feature type="transmembrane region" description="Helical; Name=1" evidence="1">
    <location>
        <begin position="28"/>
        <end position="48"/>
    </location>
</feature>
<feature type="topological domain" description="Cytoplasmic" evidence="1">
    <location>
        <begin position="49"/>
        <end position="56"/>
    </location>
</feature>
<feature type="transmembrane region" description="Helical; Name=2" evidence="1">
    <location>
        <begin position="57"/>
        <end position="77"/>
    </location>
</feature>
<feature type="topological domain" description="Extracellular" evidence="1">
    <location>
        <begin position="78"/>
        <end position="101"/>
    </location>
</feature>
<feature type="transmembrane region" description="Helical; Name=3" evidence="1">
    <location>
        <begin position="102"/>
        <end position="122"/>
    </location>
</feature>
<feature type="topological domain" description="Cytoplasmic" evidence="1">
    <location>
        <begin position="123"/>
        <end position="141"/>
    </location>
</feature>
<feature type="transmembrane region" description="Helical; Name=4" evidence="1">
    <location>
        <begin position="142"/>
        <end position="162"/>
    </location>
</feature>
<feature type="topological domain" description="Extracellular" evidence="1">
    <location>
        <begin position="163"/>
        <end position="198"/>
    </location>
</feature>
<feature type="transmembrane region" description="Helical; Name=5" evidence="1">
    <location>
        <begin position="199"/>
        <end position="219"/>
    </location>
</feature>
<feature type="topological domain" description="Cytoplasmic" evidence="1">
    <location>
        <begin position="220"/>
        <end position="239"/>
    </location>
</feature>
<feature type="transmembrane region" description="Helical; Name=6" evidence="1">
    <location>
        <begin position="240"/>
        <end position="260"/>
    </location>
</feature>
<feature type="topological domain" description="Extracellular" evidence="1">
    <location>
        <begin position="261"/>
        <end position="275"/>
    </location>
</feature>
<feature type="transmembrane region" description="Helical; Name=7" evidence="1">
    <location>
        <begin position="276"/>
        <end position="296"/>
    </location>
</feature>
<feature type="topological domain" description="Cytoplasmic" evidence="1">
    <location>
        <begin position="297"/>
        <end position="315"/>
    </location>
</feature>
<feature type="glycosylation site" description="N-linked (GlcNAc...) asparagine" evidence="1">
    <location>
        <position position="5"/>
    </location>
</feature>
<feature type="disulfide bond" evidence="2">
    <location>
        <begin position="99"/>
        <end position="191"/>
    </location>
</feature>
<keyword id="KW-1003">Cell membrane</keyword>
<keyword id="KW-1015">Disulfide bond</keyword>
<keyword id="KW-0297">G-protein coupled receptor</keyword>
<keyword id="KW-0325">Glycoprotein</keyword>
<keyword id="KW-0472">Membrane</keyword>
<keyword id="KW-0552">Olfaction</keyword>
<keyword id="KW-0675">Receptor</keyword>
<keyword id="KW-1185">Reference proteome</keyword>
<keyword id="KW-0716">Sensory transduction</keyword>
<keyword id="KW-0807">Transducer</keyword>
<keyword id="KW-0812">Transmembrane</keyword>
<keyword id="KW-1133">Transmembrane helix</keyword>
<protein>
    <recommendedName>
        <fullName>Olfactory receptor 52P1</fullName>
    </recommendedName>
</protein>
<reference key="1">
    <citation type="submission" date="2001-07" db="EMBL/GenBank/DDBJ databases">
        <title>Genome-wide discovery and analysis of human seven transmembrane helix receptor genes.</title>
        <authorList>
            <person name="Suwa M."/>
            <person name="Sato T."/>
            <person name="Okouchi I."/>
            <person name="Arita M."/>
            <person name="Futami K."/>
            <person name="Matsumoto S."/>
            <person name="Tsutsumi S."/>
            <person name="Aburatani H."/>
            <person name="Asai K."/>
            <person name="Akiyama Y."/>
        </authorList>
    </citation>
    <scope>NUCLEOTIDE SEQUENCE [GENOMIC DNA]</scope>
</reference>
<comment type="function">
    <text evidence="3">Odorant receptor.</text>
</comment>
<comment type="subcellular location">
    <subcellularLocation>
        <location evidence="3">Cell membrane</location>
        <topology evidence="1">Multi-pass membrane protein</topology>
    </subcellularLocation>
</comment>
<comment type="polymorphism">
    <text evidence="3">Segregating pseudogene, locus showing both intact and pseudogene forms in the population. This gene is a pseudogene on the reference genome but has been found to be protein coding in some individuals.</text>
</comment>
<comment type="similarity">
    <text evidence="2">Belongs to the G-protein coupled receptor 1 family.</text>
</comment>
<comment type="sequence caution" evidence="3">
    <conflict type="erroneous initiation">
        <sequence resource="EMBL-CDS" id="BAC05780"/>
    </conflict>
</comment>
<comment type="online information" name="Human Olfactory Receptor Data Exploratorium (HORDE)">
    <link uri="http://genome.weizmann.ac.il/horde/card/index/symbol:OR52P1P"/>
</comment>
<gene>
    <name evidence="4" type="primary">OR52P1</name>
    <name type="synonym">OR52P1P</name>
</gene>
<name>O52P1_HUMAN</name>
<sequence>MESPNHTDVDPSVFFLLGIPGLEQFHLWLSLPVCGLGTATIVGNITILVVVATEPVLHKPVYLFLCMLSTIDLAASVSTVPKLLAIFWCGAGHISASACLAQMFFIHAFCMMESTVLLAMAFDRYVAICHPLRYATILTDTIIAHIGVAAVVRGSLLMLPCPFLIGRLNFCQSHVILHTYCEHMAVVKLACGDTRPNRVYGLTAALLVIGVDLFCIGLSYALSAQAVLRLSSHEARSKALGTCGSHVCVILISYTPALFSFFTHRFGHHVPVHIHILLANVYLLLPPALNPVVYGVKTKQIRKRVVRVFQSGQGMGIKASE</sequence>
<evidence type="ECO:0000255" key="1"/>
<evidence type="ECO:0000255" key="2">
    <source>
        <dbReference type="PROSITE-ProRule" id="PRU00521"/>
    </source>
</evidence>
<evidence type="ECO:0000305" key="3"/>
<evidence type="ECO:0000312" key="4">
    <source>
        <dbReference type="HGNC" id="HGNC:15232"/>
    </source>
</evidence>
<proteinExistence type="inferred from homology"/>
<accession>Q8NH57</accession>
<organism>
    <name type="scientific">Homo sapiens</name>
    <name type="common">Human</name>
    <dbReference type="NCBI Taxonomy" id="9606"/>
    <lineage>
        <taxon>Eukaryota</taxon>
        <taxon>Metazoa</taxon>
        <taxon>Chordata</taxon>
        <taxon>Craniata</taxon>
        <taxon>Vertebrata</taxon>
        <taxon>Euteleostomi</taxon>
        <taxon>Mammalia</taxon>
        <taxon>Eutheria</taxon>
        <taxon>Euarchontoglires</taxon>
        <taxon>Primates</taxon>
        <taxon>Haplorrhini</taxon>
        <taxon>Catarrhini</taxon>
        <taxon>Hominidae</taxon>
        <taxon>Homo</taxon>
    </lineage>
</organism>